<proteinExistence type="inferred from homology"/>
<protein>
    <recommendedName>
        <fullName>Protein HesB</fullName>
    </recommendedName>
</protein>
<name>HESB_NOSS1</name>
<evidence type="ECO:0000305" key="1"/>
<gene>
    <name type="primary">hesB</name>
    <name type="ordered locus">all1431</name>
</gene>
<feature type="chain" id="PRO_0000076983" description="Protein HesB">
    <location>
        <begin position="1"/>
        <end position="123"/>
    </location>
</feature>
<feature type="sequence conflict" description="In Ref. 1; CAA33559." evidence="1" ref="1">
    <original>VGDCSPEGVPCS</original>
    <variation>GG</variation>
    <location>
        <begin position="112"/>
        <end position="123"/>
    </location>
</feature>
<comment type="function">
    <text>May be required for efficient nitrogen fixation.</text>
</comment>
<comment type="similarity">
    <text evidence="1">Belongs to the HesB/IscA family.</text>
</comment>
<accession>P18501</accession>
<organism>
    <name type="scientific">Nostoc sp. (strain PCC 7120 / SAG 25.82 / UTEX 2576)</name>
    <dbReference type="NCBI Taxonomy" id="103690"/>
    <lineage>
        <taxon>Bacteria</taxon>
        <taxon>Bacillati</taxon>
        <taxon>Cyanobacteriota</taxon>
        <taxon>Cyanophyceae</taxon>
        <taxon>Nostocales</taxon>
        <taxon>Nostocaceae</taxon>
        <taxon>Nostoc</taxon>
    </lineage>
</organism>
<keyword id="KW-0535">Nitrogen fixation</keyword>
<keyword id="KW-1185">Reference proteome</keyword>
<reference key="1">
    <citation type="journal article" date="1990" name="Mol. Gen. Genet.">
        <title>Expression, nucleotide sequence and mutational analysis of two open reading frames in the nif gene region of Anabaena sp. strain PCC7120.</title>
        <authorList>
            <person name="Borthakur D."/>
            <person name="Basche M."/>
            <person name="Buikema W.J."/>
            <person name="Borthakur P.B."/>
            <person name="Haselkorn R."/>
        </authorList>
    </citation>
    <scope>NUCLEOTIDE SEQUENCE [GENOMIC DNA]</scope>
</reference>
<reference key="2">
    <citation type="journal article" date="2001" name="DNA Res.">
        <title>Complete genomic sequence of the filamentous nitrogen-fixing cyanobacterium Anabaena sp. strain PCC 7120.</title>
        <authorList>
            <person name="Kaneko T."/>
            <person name="Nakamura Y."/>
            <person name="Wolk C.P."/>
            <person name="Kuritz T."/>
            <person name="Sasamoto S."/>
            <person name="Watanabe A."/>
            <person name="Iriguchi M."/>
            <person name="Ishikawa A."/>
            <person name="Kawashima K."/>
            <person name="Kimura T."/>
            <person name="Kishida Y."/>
            <person name="Kohara M."/>
            <person name="Matsumoto M."/>
            <person name="Matsuno A."/>
            <person name="Muraki A."/>
            <person name="Nakazaki N."/>
            <person name="Shimpo S."/>
            <person name="Sugimoto M."/>
            <person name="Takazawa M."/>
            <person name="Yamada M."/>
            <person name="Yasuda M."/>
            <person name="Tabata S."/>
        </authorList>
    </citation>
    <scope>NUCLEOTIDE SEQUENCE [LARGE SCALE GENOMIC DNA]</scope>
    <source>
        <strain>PCC 7120 / SAG 25.82 / UTEX 2576</strain>
    </source>
</reference>
<dbReference type="EMBL" id="X15553">
    <property type="protein sequence ID" value="CAA33559.1"/>
    <property type="molecule type" value="Genomic_DNA"/>
</dbReference>
<dbReference type="EMBL" id="BA000019">
    <property type="protein sequence ID" value="BAB73388.1"/>
    <property type="molecule type" value="Genomic_DNA"/>
</dbReference>
<dbReference type="PIR" id="AD1985">
    <property type="entry name" value="AD1985"/>
</dbReference>
<dbReference type="PIR" id="S11901">
    <property type="entry name" value="S11901"/>
</dbReference>
<dbReference type="RefSeq" id="WP_010995603.1">
    <property type="nucleotide sequence ID" value="NZ_RSCN01000040.1"/>
</dbReference>
<dbReference type="SMR" id="P18501"/>
<dbReference type="STRING" id="103690.gene:10493446"/>
<dbReference type="KEGG" id="ana:all1431"/>
<dbReference type="eggNOG" id="COG0316">
    <property type="taxonomic scope" value="Bacteria"/>
</dbReference>
<dbReference type="OrthoDB" id="9801228at2"/>
<dbReference type="Proteomes" id="UP000002483">
    <property type="component" value="Chromosome"/>
</dbReference>
<dbReference type="GO" id="GO:0051537">
    <property type="term" value="F:2 iron, 2 sulfur cluster binding"/>
    <property type="evidence" value="ECO:0007669"/>
    <property type="project" value="TreeGrafter"/>
</dbReference>
<dbReference type="GO" id="GO:0051539">
    <property type="term" value="F:4 iron, 4 sulfur cluster binding"/>
    <property type="evidence" value="ECO:0007669"/>
    <property type="project" value="TreeGrafter"/>
</dbReference>
<dbReference type="GO" id="GO:0005506">
    <property type="term" value="F:iron ion binding"/>
    <property type="evidence" value="ECO:0007669"/>
    <property type="project" value="TreeGrafter"/>
</dbReference>
<dbReference type="GO" id="GO:0016226">
    <property type="term" value="P:iron-sulfur cluster assembly"/>
    <property type="evidence" value="ECO:0007669"/>
    <property type="project" value="InterPro"/>
</dbReference>
<dbReference type="GO" id="GO:0009399">
    <property type="term" value="P:nitrogen fixation"/>
    <property type="evidence" value="ECO:0007669"/>
    <property type="project" value="UniProtKB-KW"/>
</dbReference>
<dbReference type="Gene3D" id="2.60.300.12">
    <property type="entry name" value="HesB-like domain"/>
    <property type="match status" value="1"/>
</dbReference>
<dbReference type="InterPro" id="IPR000361">
    <property type="entry name" value="FeS_biogenesis"/>
</dbReference>
<dbReference type="InterPro" id="IPR016092">
    <property type="entry name" value="FeS_cluster_insertion"/>
</dbReference>
<dbReference type="InterPro" id="IPR017870">
    <property type="entry name" value="FeS_cluster_insertion_CS"/>
</dbReference>
<dbReference type="InterPro" id="IPR035903">
    <property type="entry name" value="HesB-like_dom_sf"/>
</dbReference>
<dbReference type="NCBIfam" id="TIGR00049">
    <property type="entry name" value="iron-sulfur cluster assembly accessory protein"/>
    <property type="match status" value="1"/>
</dbReference>
<dbReference type="PANTHER" id="PTHR43011">
    <property type="entry name" value="IRON-SULFUR CLUSTER ASSEMBLY 2 HOMOLOG, MITOCHONDRIAL"/>
    <property type="match status" value="1"/>
</dbReference>
<dbReference type="PANTHER" id="PTHR43011:SF1">
    <property type="entry name" value="IRON-SULFUR CLUSTER ASSEMBLY 2 HOMOLOG, MITOCHONDRIAL"/>
    <property type="match status" value="1"/>
</dbReference>
<dbReference type="Pfam" id="PF01521">
    <property type="entry name" value="Fe-S_biosyn"/>
    <property type="match status" value="1"/>
</dbReference>
<dbReference type="SUPFAM" id="SSF89360">
    <property type="entry name" value="HesB-like domain"/>
    <property type="match status" value="1"/>
</dbReference>
<dbReference type="PROSITE" id="PS01152">
    <property type="entry name" value="HESB"/>
    <property type="match status" value="1"/>
</dbReference>
<sequence length="123" mass="13065">MTVTLTEKAEFRLRAFLRGSAKDANETTKGIRVSVKDGGCSGYEYLMDVTSQPQPDDLVTQQGSVLVYVDAKSAPLLEGIVIDFVEGLVESGFKFTNPNATSTCGCGKSFKVGDCSPEGVPCS</sequence>